<proteinExistence type="inferred from homology"/>
<organism>
    <name type="scientific">Streptomyces avermitilis (strain ATCC 31267 / DSM 46492 / JCM 5070 / NBRC 14893 / NCIMB 12804 / NRRL 8165 / MA-4680)</name>
    <dbReference type="NCBI Taxonomy" id="227882"/>
    <lineage>
        <taxon>Bacteria</taxon>
        <taxon>Bacillati</taxon>
        <taxon>Actinomycetota</taxon>
        <taxon>Actinomycetes</taxon>
        <taxon>Kitasatosporales</taxon>
        <taxon>Streptomycetaceae</taxon>
        <taxon>Streptomyces</taxon>
    </lineage>
</organism>
<gene>
    <name evidence="1" type="primary">bioD</name>
    <name type="ordered locus">SAV_7091</name>
</gene>
<sequence>MSVLVITGTGTEVGKTVTTAAVAAVAVAAGRSVAVLKPAQTGVRPDERGDADEVARLAGAVTTLELARYPEPLAPATAARRAGLPPVGPHEVAEAAAKLAVEHDLVLVEGAGGLLVRFDDADGTLADAARLLDAPVLVVASAGLGTLNTTELTARELRRREIGFAGVVIGSWPESPDLASRCNLADLPAVAGAGLLGAIPAGAGAHSPVGFRAGAPGWLAPRLGGTWDADTFASAFVP</sequence>
<name>BIOD_STRAW</name>
<dbReference type="EC" id="6.3.3.3" evidence="1"/>
<dbReference type="EMBL" id="BA000030">
    <property type="protein sequence ID" value="BAC74802.1"/>
    <property type="molecule type" value="Genomic_DNA"/>
</dbReference>
<dbReference type="RefSeq" id="WP_010988486.1">
    <property type="nucleotide sequence ID" value="NZ_JZJK01000085.1"/>
</dbReference>
<dbReference type="SMR" id="Q826T4"/>
<dbReference type="GeneID" id="41544165"/>
<dbReference type="KEGG" id="sma:SAVERM_7091"/>
<dbReference type="eggNOG" id="COG0132">
    <property type="taxonomic scope" value="Bacteria"/>
</dbReference>
<dbReference type="HOGENOM" id="CLU_072551_1_0_11"/>
<dbReference type="OrthoDB" id="9802610at2"/>
<dbReference type="UniPathway" id="UPA00078">
    <property type="reaction ID" value="UER00161"/>
</dbReference>
<dbReference type="Proteomes" id="UP000000428">
    <property type="component" value="Chromosome"/>
</dbReference>
<dbReference type="GO" id="GO:0005829">
    <property type="term" value="C:cytosol"/>
    <property type="evidence" value="ECO:0007669"/>
    <property type="project" value="TreeGrafter"/>
</dbReference>
<dbReference type="GO" id="GO:0005524">
    <property type="term" value="F:ATP binding"/>
    <property type="evidence" value="ECO:0007669"/>
    <property type="project" value="UniProtKB-UniRule"/>
</dbReference>
<dbReference type="GO" id="GO:0004141">
    <property type="term" value="F:dethiobiotin synthase activity"/>
    <property type="evidence" value="ECO:0007669"/>
    <property type="project" value="UniProtKB-UniRule"/>
</dbReference>
<dbReference type="GO" id="GO:0000287">
    <property type="term" value="F:magnesium ion binding"/>
    <property type="evidence" value="ECO:0007669"/>
    <property type="project" value="UniProtKB-UniRule"/>
</dbReference>
<dbReference type="GO" id="GO:0009102">
    <property type="term" value="P:biotin biosynthetic process"/>
    <property type="evidence" value="ECO:0007669"/>
    <property type="project" value="UniProtKB-UniRule"/>
</dbReference>
<dbReference type="CDD" id="cd03109">
    <property type="entry name" value="DTBS"/>
    <property type="match status" value="1"/>
</dbReference>
<dbReference type="Gene3D" id="3.40.50.300">
    <property type="entry name" value="P-loop containing nucleotide triphosphate hydrolases"/>
    <property type="match status" value="1"/>
</dbReference>
<dbReference type="HAMAP" id="MF_00336">
    <property type="entry name" value="BioD"/>
    <property type="match status" value="1"/>
</dbReference>
<dbReference type="InterPro" id="IPR004472">
    <property type="entry name" value="DTB_synth_BioD"/>
</dbReference>
<dbReference type="InterPro" id="IPR027417">
    <property type="entry name" value="P-loop_NTPase"/>
</dbReference>
<dbReference type="NCBIfam" id="TIGR00347">
    <property type="entry name" value="bioD"/>
    <property type="match status" value="1"/>
</dbReference>
<dbReference type="PANTHER" id="PTHR43210">
    <property type="entry name" value="DETHIOBIOTIN SYNTHETASE"/>
    <property type="match status" value="1"/>
</dbReference>
<dbReference type="PANTHER" id="PTHR43210:SF5">
    <property type="entry name" value="DETHIOBIOTIN SYNTHETASE"/>
    <property type="match status" value="1"/>
</dbReference>
<dbReference type="Pfam" id="PF13500">
    <property type="entry name" value="AAA_26"/>
    <property type="match status" value="1"/>
</dbReference>
<dbReference type="PIRSF" id="PIRSF006755">
    <property type="entry name" value="DTB_synth"/>
    <property type="match status" value="1"/>
</dbReference>
<dbReference type="SUPFAM" id="SSF52540">
    <property type="entry name" value="P-loop containing nucleoside triphosphate hydrolases"/>
    <property type="match status" value="1"/>
</dbReference>
<feature type="chain" id="PRO_0000302550" description="ATP-dependent dethiobiotin synthetase BioD">
    <location>
        <begin position="1"/>
        <end position="238"/>
    </location>
</feature>
<feature type="active site" evidence="1">
    <location>
        <position position="37"/>
    </location>
</feature>
<feature type="binding site" evidence="1">
    <location>
        <begin position="12"/>
        <end position="17"/>
    </location>
    <ligand>
        <name>ATP</name>
        <dbReference type="ChEBI" id="CHEBI:30616"/>
    </ligand>
</feature>
<feature type="binding site" evidence="1">
    <location>
        <position position="16"/>
    </location>
    <ligand>
        <name>Mg(2+)</name>
        <dbReference type="ChEBI" id="CHEBI:18420"/>
    </ligand>
</feature>
<feature type="binding site" evidence="1">
    <location>
        <position position="41"/>
    </location>
    <ligand>
        <name>substrate</name>
    </ligand>
</feature>
<feature type="binding site" evidence="1">
    <location>
        <position position="50"/>
    </location>
    <ligand>
        <name>ATP</name>
        <dbReference type="ChEBI" id="CHEBI:30616"/>
    </ligand>
</feature>
<feature type="binding site" evidence="1">
    <location>
        <position position="50"/>
    </location>
    <ligand>
        <name>Mg(2+)</name>
        <dbReference type="ChEBI" id="CHEBI:18420"/>
    </ligand>
</feature>
<feature type="binding site" evidence="1">
    <location>
        <begin position="109"/>
        <end position="112"/>
    </location>
    <ligand>
        <name>ATP</name>
        <dbReference type="ChEBI" id="CHEBI:30616"/>
    </ligand>
</feature>
<feature type="binding site" evidence="1">
    <location>
        <position position="109"/>
    </location>
    <ligand>
        <name>Mg(2+)</name>
        <dbReference type="ChEBI" id="CHEBI:18420"/>
    </ligand>
</feature>
<feature type="binding site" evidence="1">
    <location>
        <begin position="170"/>
        <end position="171"/>
    </location>
    <ligand>
        <name>ATP</name>
        <dbReference type="ChEBI" id="CHEBI:30616"/>
    </ligand>
</feature>
<feature type="binding site" evidence="1">
    <location>
        <begin position="200"/>
        <end position="202"/>
    </location>
    <ligand>
        <name>ATP</name>
        <dbReference type="ChEBI" id="CHEBI:30616"/>
    </ligand>
</feature>
<protein>
    <recommendedName>
        <fullName evidence="1">ATP-dependent dethiobiotin synthetase BioD</fullName>
        <ecNumber evidence="1">6.3.3.3</ecNumber>
    </recommendedName>
    <alternativeName>
        <fullName evidence="1">DTB synthetase</fullName>
        <shortName evidence="1">DTBS</shortName>
    </alternativeName>
    <alternativeName>
        <fullName evidence="1">Dethiobiotin synthase</fullName>
    </alternativeName>
</protein>
<keyword id="KW-0067">ATP-binding</keyword>
<keyword id="KW-0093">Biotin biosynthesis</keyword>
<keyword id="KW-0963">Cytoplasm</keyword>
<keyword id="KW-0436">Ligase</keyword>
<keyword id="KW-0460">Magnesium</keyword>
<keyword id="KW-0479">Metal-binding</keyword>
<keyword id="KW-0547">Nucleotide-binding</keyword>
<keyword id="KW-1185">Reference proteome</keyword>
<comment type="function">
    <text evidence="1">Catalyzes a mechanistically unusual reaction, the ATP-dependent insertion of CO2 between the N7 and N8 nitrogen atoms of 7,8-diaminopelargonic acid (DAPA, also called 7,8-diammoniononanoate) to form a ureido ring.</text>
</comment>
<comment type="catalytic activity">
    <reaction evidence="1">
        <text>(7R,8S)-7,8-diammoniononanoate + CO2 + ATP = (4R,5S)-dethiobiotin + ADP + phosphate + 3 H(+)</text>
        <dbReference type="Rhea" id="RHEA:15805"/>
        <dbReference type="ChEBI" id="CHEBI:15378"/>
        <dbReference type="ChEBI" id="CHEBI:16526"/>
        <dbReference type="ChEBI" id="CHEBI:30616"/>
        <dbReference type="ChEBI" id="CHEBI:43474"/>
        <dbReference type="ChEBI" id="CHEBI:149469"/>
        <dbReference type="ChEBI" id="CHEBI:149473"/>
        <dbReference type="ChEBI" id="CHEBI:456216"/>
        <dbReference type="EC" id="6.3.3.3"/>
    </reaction>
</comment>
<comment type="cofactor">
    <cofactor evidence="1">
        <name>Mg(2+)</name>
        <dbReference type="ChEBI" id="CHEBI:18420"/>
    </cofactor>
</comment>
<comment type="pathway">
    <text evidence="1">Cofactor biosynthesis; biotin biosynthesis; biotin from 7,8-diaminononanoate: step 1/2.</text>
</comment>
<comment type="subunit">
    <text evidence="1">Homodimer.</text>
</comment>
<comment type="subcellular location">
    <subcellularLocation>
        <location evidence="1">Cytoplasm</location>
    </subcellularLocation>
</comment>
<comment type="similarity">
    <text evidence="1">Belongs to the dethiobiotin synthetase family.</text>
</comment>
<reference key="1">
    <citation type="journal article" date="2001" name="Proc. Natl. Acad. Sci. U.S.A.">
        <title>Genome sequence of an industrial microorganism Streptomyces avermitilis: deducing the ability of producing secondary metabolites.</title>
        <authorList>
            <person name="Omura S."/>
            <person name="Ikeda H."/>
            <person name="Ishikawa J."/>
            <person name="Hanamoto A."/>
            <person name="Takahashi C."/>
            <person name="Shinose M."/>
            <person name="Takahashi Y."/>
            <person name="Horikawa H."/>
            <person name="Nakazawa H."/>
            <person name="Osonoe T."/>
            <person name="Kikuchi H."/>
            <person name="Shiba T."/>
            <person name="Sakaki Y."/>
            <person name="Hattori M."/>
        </authorList>
    </citation>
    <scope>NUCLEOTIDE SEQUENCE [LARGE SCALE GENOMIC DNA]</scope>
    <source>
        <strain>ATCC 31267 / DSM 46492 / JCM 5070 / NBRC 14893 / NCIMB 12804 / NRRL 8165 / MA-4680</strain>
    </source>
</reference>
<reference key="2">
    <citation type="journal article" date="2003" name="Nat. Biotechnol.">
        <title>Complete genome sequence and comparative analysis of the industrial microorganism Streptomyces avermitilis.</title>
        <authorList>
            <person name="Ikeda H."/>
            <person name="Ishikawa J."/>
            <person name="Hanamoto A."/>
            <person name="Shinose M."/>
            <person name="Kikuchi H."/>
            <person name="Shiba T."/>
            <person name="Sakaki Y."/>
            <person name="Hattori M."/>
            <person name="Omura S."/>
        </authorList>
    </citation>
    <scope>NUCLEOTIDE SEQUENCE [LARGE SCALE GENOMIC DNA]</scope>
    <source>
        <strain>ATCC 31267 / DSM 46492 / JCM 5070 / NBRC 14893 / NCIMB 12804 / NRRL 8165 / MA-4680</strain>
    </source>
</reference>
<evidence type="ECO:0000255" key="1">
    <source>
        <dbReference type="HAMAP-Rule" id="MF_00336"/>
    </source>
</evidence>
<accession>Q826T4</accession>